<organism>
    <name type="scientific">Bacillus cereus (strain AH187)</name>
    <dbReference type="NCBI Taxonomy" id="405534"/>
    <lineage>
        <taxon>Bacteria</taxon>
        <taxon>Bacillati</taxon>
        <taxon>Bacillota</taxon>
        <taxon>Bacilli</taxon>
        <taxon>Bacillales</taxon>
        <taxon>Bacillaceae</taxon>
        <taxon>Bacillus</taxon>
        <taxon>Bacillus cereus group</taxon>
    </lineage>
</organism>
<accession>B7HZG8</accession>
<evidence type="ECO:0000255" key="1">
    <source>
        <dbReference type="HAMAP-Rule" id="MF_00074"/>
    </source>
</evidence>
<dbReference type="EC" id="2.1.1.-" evidence="1"/>
<dbReference type="EMBL" id="CP001177">
    <property type="protein sequence ID" value="ACJ80876.1"/>
    <property type="molecule type" value="Genomic_DNA"/>
</dbReference>
<dbReference type="SMR" id="B7HZG8"/>
<dbReference type="KEGG" id="bcr:BCAH187_A5669"/>
<dbReference type="HOGENOM" id="CLU_065341_0_2_9"/>
<dbReference type="Proteomes" id="UP000002214">
    <property type="component" value="Chromosome"/>
</dbReference>
<dbReference type="GO" id="GO:0005829">
    <property type="term" value="C:cytosol"/>
    <property type="evidence" value="ECO:0007669"/>
    <property type="project" value="TreeGrafter"/>
</dbReference>
<dbReference type="GO" id="GO:0070043">
    <property type="term" value="F:rRNA (guanine-N7-)-methyltransferase activity"/>
    <property type="evidence" value="ECO:0007669"/>
    <property type="project" value="UniProtKB-UniRule"/>
</dbReference>
<dbReference type="CDD" id="cd02440">
    <property type="entry name" value="AdoMet_MTases"/>
    <property type="match status" value="1"/>
</dbReference>
<dbReference type="FunFam" id="3.40.50.150:FF:000041">
    <property type="entry name" value="Ribosomal RNA small subunit methyltransferase G"/>
    <property type="match status" value="1"/>
</dbReference>
<dbReference type="Gene3D" id="3.40.50.150">
    <property type="entry name" value="Vaccinia Virus protein VP39"/>
    <property type="match status" value="1"/>
</dbReference>
<dbReference type="HAMAP" id="MF_00074">
    <property type="entry name" value="16SrRNA_methyltr_G"/>
    <property type="match status" value="1"/>
</dbReference>
<dbReference type="InterPro" id="IPR003682">
    <property type="entry name" value="rRNA_ssu_MeTfrase_G"/>
</dbReference>
<dbReference type="InterPro" id="IPR029063">
    <property type="entry name" value="SAM-dependent_MTases_sf"/>
</dbReference>
<dbReference type="NCBIfam" id="TIGR00138">
    <property type="entry name" value="rsmG_gidB"/>
    <property type="match status" value="1"/>
</dbReference>
<dbReference type="PANTHER" id="PTHR31760">
    <property type="entry name" value="S-ADENOSYL-L-METHIONINE-DEPENDENT METHYLTRANSFERASES SUPERFAMILY PROTEIN"/>
    <property type="match status" value="1"/>
</dbReference>
<dbReference type="PANTHER" id="PTHR31760:SF0">
    <property type="entry name" value="S-ADENOSYL-L-METHIONINE-DEPENDENT METHYLTRANSFERASES SUPERFAMILY PROTEIN"/>
    <property type="match status" value="1"/>
</dbReference>
<dbReference type="Pfam" id="PF02527">
    <property type="entry name" value="GidB"/>
    <property type="match status" value="1"/>
</dbReference>
<dbReference type="PIRSF" id="PIRSF003078">
    <property type="entry name" value="GidB"/>
    <property type="match status" value="1"/>
</dbReference>
<dbReference type="SUPFAM" id="SSF53335">
    <property type="entry name" value="S-adenosyl-L-methionine-dependent methyltransferases"/>
    <property type="match status" value="1"/>
</dbReference>
<name>RSMG_BACC7</name>
<keyword id="KW-0963">Cytoplasm</keyword>
<keyword id="KW-0489">Methyltransferase</keyword>
<keyword id="KW-0698">rRNA processing</keyword>
<keyword id="KW-0949">S-adenosyl-L-methionine</keyword>
<keyword id="KW-0808">Transferase</keyword>
<feature type="chain" id="PRO_1000117064" description="Ribosomal RNA small subunit methyltransferase G">
    <location>
        <begin position="1"/>
        <end position="239"/>
    </location>
</feature>
<feature type="binding site" evidence="1">
    <location>
        <position position="77"/>
    </location>
    <ligand>
        <name>S-adenosyl-L-methionine</name>
        <dbReference type="ChEBI" id="CHEBI:59789"/>
    </ligand>
</feature>
<feature type="binding site" evidence="1">
    <location>
        <position position="82"/>
    </location>
    <ligand>
        <name>S-adenosyl-L-methionine</name>
        <dbReference type="ChEBI" id="CHEBI:59789"/>
    </ligand>
</feature>
<feature type="binding site" evidence="1">
    <location>
        <begin position="128"/>
        <end position="129"/>
    </location>
    <ligand>
        <name>S-adenosyl-L-methionine</name>
        <dbReference type="ChEBI" id="CHEBI:59789"/>
    </ligand>
</feature>
<feature type="binding site" evidence="1">
    <location>
        <position position="147"/>
    </location>
    <ligand>
        <name>S-adenosyl-L-methionine</name>
        <dbReference type="ChEBI" id="CHEBI:59789"/>
    </ligand>
</feature>
<reference key="1">
    <citation type="submission" date="2008-10" db="EMBL/GenBank/DDBJ databases">
        <title>Genome sequence of Bacillus cereus AH187.</title>
        <authorList>
            <person name="Dodson R.J."/>
            <person name="Durkin A.S."/>
            <person name="Rosovitz M.J."/>
            <person name="Rasko D.A."/>
            <person name="Kolsto A.B."/>
            <person name="Okstad O.A."/>
            <person name="Ravel J."/>
            <person name="Sutton G."/>
        </authorList>
    </citation>
    <scope>NUCLEOTIDE SEQUENCE [LARGE SCALE GENOMIC DNA]</scope>
    <source>
        <strain>AH187</strain>
    </source>
</reference>
<comment type="function">
    <text evidence="1">Specifically methylates the N7 position of guanine in position 535 of 16S rRNA.</text>
</comment>
<comment type="subcellular location">
    <subcellularLocation>
        <location evidence="1">Cytoplasm</location>
    </subcellularLocation>
</comment>
<comment type="similarity">
    <text evidence="1">Belongs to the methyltransferase superfamily. RNA methyltransferase RsmG family.</text>
</comment>
<gene>
    <name evidence="1" type="primary">rsmG</name>
    <name type="ordered locus">BCAH187_A5669</name>
</gene>
<sequence length="239" mass="27192">MNIEQFQSMLEEKGIPLSSRQLEQFEIYFETLVEWNEKMNLTAITEKEEVYLKHFFDSITAAFYYDFSKPFSICDVGAGAGFPSIPLKICFPHLKVTIVDSLQKRINFLNHLAQKLELSDVAFCHDRAETFGKKEGVREAYDIVMARAVARLSVLSELCLPLVKVGGTFIAMKGAAANEEIENGKYALEVLGGDLKEMSTFQLPFEESERNILLIEKKRKTPKKYPRKPGTPNKLPIEK</sequence>
<protein>
    <recommendedName>
        <fullName evidence="1">Ribosomal RNA small subunit methyltransferase G</fullName>
        <ecNumber evidence="1">2.1.1.-</ecNumber>
    </recommendedName>
    <alternativeName>
        <fullName evidence="1">16S rRNA 7-methylguanosine methyltransferase</fullName>
        <shortName evidence="1">16S rRNA m7G methyltransferase</shortName>
    </alternativeName>
</protein>
<proteinExistence type="inferred from homology"/>